<organism>
    <name type="scientific">Methanocaldococcus jannaschii (strain ATCC 43067 / DSM 2661 / JAL-1 / JCM 10045 / NBRC 100440)</name>
    <name type="common">Methanococcus jannaschii</name>
    <dbReference type="NCBI Taxonomy" id="243232"/>
    <lineage>
        <taxon>Archaea</taxon>
        <taxon>Methanobacteriati</taxon>
        <taxon>Methanobacteriota</taxon>
        <taxon>Methanomada group</taxon>
        <taxon>Methanococci</taxon>
        <taxon>Methanococcales</taxon>
        <taxon>Methanocaldococcaceae</taxon>
        <taxon>Methanocaldococcus</taxon>
    </lineage>
</organism>
<name>Y760_METJA</name>
<sequence>MIRMIRKFKVKGLRSPSLLIDMILNDTEEGILVVETDGEEQIKDIEKLLKKYNLKYEVDGNVVKIYVGEIKADKTINVVGATCPGPIMMVSDMLSKMKNGEILEIICGKNSLTDLTEGLKGMGNEIIKVEDKGDGTYRILVKKGEKKEEKAAVTKIDELFIINTTGTGNAEKAYATFMMADVALKMNLKPTIFLMMDGASLALKGECDRVKHPAFPKLGDLVRDILSKGVKIYVCELSAEFRGINEKNLEEGFEIAGAPTFLNYLSKPNVRPVWL</sequence>
<accession>Q58170</accession>
<reference key="1">
    <citation type="journal article" date="1996" name="Science">
        <title>Complete genome sequence of the methanogenic archaeon, Methanococcus jannaschii.</title>
        <authorList>
            <person name="Bult C.J."/>
            <person name="White O."/>
            <person name="Olsen G.J."/>
            <person name="Zhou L."/>
            <person name="Fleischmann R.D."/>
            <person name="Sutton G.G."/>
            <person name="Blake J.A."/>
            <person name="FitzGerald L.M."/>
            <person name="Clayton R.A."/>
            <person name="Gocayne J.D."/>
            <person name="Kerlavage A.R."/>
            <person name="Dougherty B.A."/>
            <person name="Tomb J.-F."/>
            <person name="Adams M.D."/>
            <person name="Reich C.I."/>
            <person name="Overbeek R."/>
            <person name="Kirkness E.F."/>
            <person name="Weinstock K.G."/>
            <person name="Merrick J.M."/>
            <person name="Glodek A."/>
            <person name="Scott J.L."/>
            <person name="Geoghagen N.S.M."/>
            <person name="Weidman J.F."/>
            <person name="Fuhrmann J.L."/>
            <person name="Nguyen D."/>
            <person name="Utterback T.R."/>
            <person name="Kelley J.M."/>
            <person name="Peterson J.D."/>
            <person name="Sadow P.W."/>
            <person name="Hanna M.C."/>
            <person name="Cotton M.D."/>
            <person name="Roberts K.M."/>
            <person name="Hurst M.A."/>
            <person name="Kaine B.P."/>
            <person name="Borodovsky M."/>
            <person name="Klenk H.-P."/>
            <person name="Fraser C.M."/>
            <person name="Smith H.O."/>
            <person name="Woese C.R."/>
            <person name="Venter J.C."/>
        </authorList>
    </citation>
    <scope>NUCLEOTIDE SEQUENCE [LARGE SCALE GENOMIC DNA]</scope>
    <source>
        <strain>ATCC 43067 / DSM 2661 / JAL-1 / JCM 10045 / NBRC 100440</strain>
    </source>
</reference>
<keyword id="KW-1185">Reference proteome</keyword>
<feature type="chain" id="PRO_0000107019" description="Uncharacterized protein MJ0760">
    <location>
        <begin position="1"/>
        <end position="275"/>
    </location>
</feature>
<dbReference type="EMBL" id="L77117">
    <property type="protein sequence ID" value="AAB98751.1"/>
    <property type="molecule type" value="Genomic_DNA"/>
</dbReference>
<dbReference type="PIR" id="H64394">
    <property type="entry name" value="H64394"/>
</dbReference>
<dbReference type="SMR" id="Q58170"/>
<dbReference type="STRING" id="243232.MJ_0760"/>
<dbReference type="PaxDb" id="243232-MJ_0760"/>
<dbReference type="DNASU" id="1451637"/>
<dbReference type="EnsemblBacteria" id="AAB98751">
    <property type="protein sequence ID" value="AAB98751"/>
    <property type="gene ID" value="MJ_0760"/>
</dbReference>
<dbReference type="KEGG" id="mja:MJ_0760"/>
<dbReference type="eggNOG" id="arCOG02066">
    <property type="taxonomic scope" value="Archaea"/>
</dbReference>
<dbReference type="HOGENOM" id="CLU_088479_0_0_2"/>
<dbReference type="InParanoid" id="Q58170"/>
<dbReference type="PhylomeDB" id="Q58170"/>
<dbReference type="Proteomes" id="UP000000805">
    <property type="component" value="Chromosome"/>
</dbReference>
<dbReference type="CDD" id="cd00291">
    <property type="entry name" value="SirA_YedF_YeeD"/>
    <property type="match status" value="1"/>
</dbReference>
<dbReference type="Gene3D" id="3.40.1260.10">
    <property type="entry name" value="DsrEFH-like"/>
    <property type="match status" value="1"/>
</dbReference>
<dbReference type="Gene3D" id="3.30.110.40">
    <property type="entry name" value="TusA-like domain"/>
    <property type="match status" value="1"/>
</dbReference>
<dbReference type="InterPro" id="IPR027396">
    <property type="entry name" value="DsrEFH-like"/>
</dbReference>
<dbReference type="InterPro" id="IPR003787">
    <property type="entry name" value="Sulphur_relay_DsrE/F-like"/>
</dbReference>
<dbReference type="InterPro" id="IPR001455">
    <property type="entry name" value="TusA-like"/>
</dbReference>
<dbReference type="InterPro" id="IPR036868">
    <property type="entry name" value="TusA-like_sf"/>
</dbReference>
<dbReference type="PANTHER" id="PTHR33279:SF18">
    <property type="entry name" value="SULFUR CARRIER PROTEIN MJ0990-RELATED"/>
    <property type="match status" value="1"/>
</dbReference>
<dbReference type="PANTHER" id="PTHR33279">
    <property type="entry name" value="SULFUR CARRIER PROTEIN YEDF-RELATED"/>
    <property type="match status" value="1"/>
</dbReference>
<dbReference type="Pfam" id="PF02635">
    <property type="entry name" value="DsrE"/>
    <property type="match status" value="1"/>
</dbReference>
<dbReference type="Pfam" id="PF01206">
    <property type="entry name" value="TusA"/>
    <property type="match status" value="1"/>
</dbReference>
<dbReference type="SUPFAM" id="SSF75169">
    <property type="entry name" value="DsrEFH-like"/>
    <property type="match status" value="1"/>
</dbReference>
<dbReference type="SUPFAM" id="SSF64307">
    <property type="entry name" value="SirA-like"/>
    <property type="match status" value="1"/>
</dbReference>
<proteinExistence type="predicted"/>
<protein>
    <recommendedName>
        <fullName>Uncharacterized protein MJ0760</fullName>
    </recommendedName>
</protein>
<gene>
    <name type="ordered locus">MJ0760</name>
</gene>